<reference key="1">
    <citation type="journal article" date="2011" name="J. Bacteriol.">
        <title>Comparative genomics of 28 Salmonella enterica isolates: evidence for CRISPR-mediated adaptive sublineage evolution.</title>
        <authorList>
            <person name="Fricke W.F."/>
            <person name="Mammel M.K."/>
            <person name="McDermott P.F."/>
            <person name="Tartera C."/>
            <person name="White D.G."/>
            <person name="Leclerc J.E."/>
            <person name="Ravel J."/>
            <person name="Cebula T.A."/>
        </authorList>
    </citation>
    <scope>NUCLEOTIDE SEQUENCE [LARGE SCALE GENOMIC DNA]</scope>
    <source>
        <strain>CVM19633</strain>
    </source>
</reference>
<organism>
    <name type="scientific">Salmonella schwarzengrund (strain CVM19633)</name>
    <dbReference type="NCBI Taxonomy" id="439843"/>
    <lineage>
        <taxon>Bacteria</taxon>
        <taxon>Pseudomonadati</taxon>
        <taxon>Pseudomonadota</taxon>
        <taxon>Gammaproteobacteria</taxon>
        <taxon>Enterobacterales</taxon>
        <taxon>Enterobacteriaceae</taxon>
        <taxon>Salmonella</taxon>
    </lineage>
</organism>
<keyword id="KW-0029">Amino-acid transport</keyword>
<keyword id="KW-0997">Cell inner membrane</keyword>
<keyword id="KW-1003">Cell membrane</keyword>
<keyword id="KW-0472">Membrane</keyword>
<keyword id="KW-0769">Symport</keyword>
<keyword id="KW-0812">Transmembrane</keyword>
<keyword id="KW-1133">Transmembrane helix</keyword>
<keyword id="KW-0813">Transport</keyword>
<evidence type="ECO:0000255" key="1">
    <source>
        <dbReference type="HAMAP-Rule" id="MF_01582"/>
    </source>
</evidence>
<name>SSTT_SALSV</name>
<sequence>MATQRASGLLQRLAQGSLVKQILVGLVLGILLAWISKPAAEAVGLLGTLFVGALKAVAPVLVLMLVMASIANHQHGQKTNIRPILFLYLLGTFSAALAAVVFSFAFPSTLHLSSSAQDIVPPSGIVEVLRGLLMSMVSNPIDALLNANYIGILVWAVSLGFALRHGNETTKNLVNDMSNAVTFMVKLVIRFAPIGIFGLVSSTLATTGFSTLWGYAHLLVVLIGCMLLVALVVNPLLVFWKIRRNPYPLVFACLRESGVYAFFTRSSAANIPVNMALCEKLNLDRDTYSVSIPLGATINMAGAAITITVLTLAAVHTLGVPVDLPTALLLSVVASLCACGASGVAGGSLLLIPLACNMFGIPNDIAMQVVAVGFIIGVLQDSCETALNSSTDVLFTAAACQAEDERLANNALRS</sequence>
<proteinExistence type="inferred from homology"/>
<feature type="chain" id="PRO_1000197564" description="Serine/threonine transporter SstT">
    <location>
        <begin position="1"/>
        <end position="414"/>
    </location>
</feature>
<feature type="transmembrane region" description="Helical" evidence="1">
    <location>
        <begin position="16"/>
        <end position="36"/>
    </location>
</feature>
<feature type="transmembrane region" description="Helical" evidence="1">
    <location>
        <begin position="46"/>
        <end position="66"/>
    </location>
</feature>
<feature type="transmembrane region" description="Helical" evidence="1">
    <location>
        <begin position="84"/>
        <end position="104"/>
    </location>
</feature>
<feature type="transmembrane region" description="Helical" evidence="1">
    <location>
        <begin position="143"/>
        <end position="163"/>
    </location>
</feature>
<feature type="transmembrane region" description="Helical" evidence="1">
    <location>
        <begin position="180"/>
        <end position="200"/>
    </location>
</feature>
<feature type="transmembrane region" description="Helical" evidence="1">
    <location>
        <begin position="219"/>
        <end position="239"/>
    </location>
</feature>
<feature type="transmembrane region" description="Helical" evidence="1">
    <location>
        <begin position="300"/>
        <end position="320"/>
    </location>
</feature>
<feature type="transmembrane region" description="Helical" evidence="1">
    <location>
        <begin position="332"/>
        <end position="352"/>
    </location>
</feature>
<gene>
    <name evidence="1" type="primary">sstT</name>
    <name type="ordered locus">SeSA_A3416</name>
</gene>
<dbReference type="EMBL" id="CP001127">
    <property type="protein sequence ID" value="ACF91250.1"/>
    <property type="molecule type" value="Genomic_DNA"/>
</dbReference>
<dbReference type="RefSeq" id="WP_000235367.1">
    <property type="nucleotide sequence ID" value="NC_011094.1"/>
</dbReference>
<dbReference type="SMR" id="B4TVV9"/>
<dbReference type="KEGG" id="sew:SeSA_A3416"/>
<dbReference type="HOGENOM" id="CLU_044581_0_0_6"/>
<dbReference type="Proteomes" id="UP000001865">
    <property type="component" value="Chromosome"/>
</dbReference>
<dbReference type="GO" id="GO:0005886">
    <property type="term" value="C:plasma membrane"/>
    <property type="evidence" value="ECO:0007669"/>
    <property type="project" value="UniProtKB-SubCell"/>
</dbReference>
<dbReference type="GO" id="GO:0005295">
    <property type="term" value="F:neutral L-amino acid:sodium symporter activity"/>
    <property type="evidence" value="ECO:0007669"/>
    <property type="project" value="TreeGrafter"/>
</dbReference>
<dbReference type="GO" id="GO:0032329">
    <property type="term" value="P:serine transport"/>
    <property type="evidence" value="ECO:0007669"/>
    <property type="project" value="InterPro"/>
</dbReference>
<dbReference type="GO" id="GO:0015826">
    <property type="term" value="P:threonine transport"/>
    <property type="evidence" value="ECO:0007669"/>
    <property type="project" value="InterPro"/>
</dbReference>
<dbReference type="FunFam" id="1.10.3860.10:FF:000003">
    <property type="entry name" value="Serine/threonine transporter sstT"/>
    <property type="match status" value="1"/>
</dbReference>
<dbReference type="Gene3D" id="1.10.3860.10">
    <property type="entry name" value="Sodium:dicarboxylate symporter"/>
    <property type="match status" value="1"/>
</dbReference>
<dbReference type="HAMAP" id="MF_01582">
    <property type="entry name" value="Ser_Thr_transp_SstT"/>
    <property type="match status" value="1"/>
</dbReference>
<dbReference type="InterPro" id="IPR001991">
    <property type="entry name" value="Na-dicarboxylate_symporter"/>
</dbReference>
<dbReference type="InterPro" id="IPR036458">
    <property type="entry name" value="Na:dicarbo_symporter_sf"/>
</dbReference>
<dbReference type="InterPro" id="IPR023025">
    <property type="entry name" value="Ser_Thr_transp_SstT"/>
</dbReference>
<dbReference type="NCBIfam" id="NF010151">
    <property type="entry name" value="PRK13628.1"/>
    <property type="match status" value="1"/>
</dbReference>
<dbReference type="PANTHER" id="PTHR42865">
    <property type="entry name" value="PROTON/GLUTAMATE-ASPARTATE SYMPORTER"/>
    <property type="match status" value="1"/>
</dbReference>
<dbReference type="PANTHER" id="PTHR42865:SF8">
    <property type="entry name" value="SERINE_THREONINE TRANSPORTER SSTT"/>
    <property type="match status" value="1"/>
</dbReference>
<dbReference type="Pfam" id="PF00375">
    <property type="entry name" value="SDF"/>
    <property type="match status" value="1"/>
</dbReference>
<dbReference type="PRINTS" id="PR00173">
    <property type="entry name" value="EDTRNSPORT"/>
</dbReference>
<dbReference type="SUPFAM" id="SSF118215">
    <property type="entry name" value="Proton glutamate symport protein"/>
    <property type="match status" value="1"/>
</dbReference>
<dbReference type="PROSITE" id="PS00713">
    <property type="entry name" value="NA_DICARBOXYL_SYMP_1"/>
    <property type="match status" value="1"/>
</dbReference>
<comment type="function">
    <text evidence="1">Involved in the import of serine and threonine into the cell, with the concomitant import of sodium (symport system).</text>
</comment>
<comment type="catalytic activity">
    <reaction evidence="1">
        <text>L-serine(in) + Na(+)(in) = L-serine(out) + Na(+)(out)</text>
        <dbReference type="Rhea" id="RHEA:29575"/>
        <dbReference type="ChEBI" id="CHEBI:29101"/>
        <dbReference type="ChEBI" id="CHEBI:33384"/>
    </reaction>
    <physiologicalReaction direction="right-to-left" evidence="1">
        <dbReference type="Rhea" id="RHEA:29577"/>
    </physiologicalReaction>
</comment>
<comment type="catalytic activity">
    <reaction evidence="1">
        <text>L-threonine(in) + Na(+)(in) = L-threonine(out) + Na(+)(out)</text>
        <dbReference type="Rhea" id="RHEA:69999"/>
        <dbReference type="ChEBI" id="CHEBI:29101"/>
        <dbReference type="ChEBI" id="CHEBI:57926"/>
    </reaction>
    <physiologicalReaction direction="right-to-left" evidence="1">
        <dbReference type="Rhea" id="RHEA:70001"/>
    </physiologicalReaction>
</comment>
<comment type="subcellular location">
    <subcellularLocation>
        <location evidence="1">Cell inner membrane</location>
        <topology evidence="1">Multi-pass membrane protein</topology>
    </subcellularLocation>
</comment>
<comment type="similarity">
    <text evidence="1">Belongs to the dicarboxylate/amino acid:cation symporter (DAACS) (TC 2.A.23) family.</text>
</comment>
<protein>
    <recommendedName>
        <fullName evidence="1">Serine/threonine transporter SstT</fullName>
    </recommendedName>
    <alternativeName>
        <fullName evidence="1">Na(+)/serine-threonine symporter</fullName>
    </alternativeName>
</protein>
<accession>B4TVV9</accession>